<dbReference type="EMBL" id="AAYY01000011">
    <property type="protein sequence ID" value="EDP42573.1"/>
    <property type="molecule type" value="Genomic_DNA"/>
</dbReference>
<dbReference type="RefSeq" id="XP_001729787.1">
    <property type="nucleotide sequence ID" value="XM_001729735.1"/>
</dbReference>
<dbReference type="SMR" id="A8Q7G1"/>
<dbReference type="GeneID" id="5854093"/>
<dbReference type="KEGG" id="mgl:MGL_3331"/>
<dbReference type="VEuPathDB" id="FungiDB:MGL_3331"/>
<dbReference type="InParanoid" id="A8Q7G1"/>
<dbReference type="OMA" id="NEMQIAR"/>
<dbReference type="OrthoDB" id="771136at2759"/>
<dbReference type="Proteomes" id="UP000008837">
    <property type="component" value="Unassembled WGS sequence"/>
</dbReference>
<dbReference type="GO" id="GO:0005576">
    <property type="term" value="C:extracellular region"/>
    <property type="evidence" value="ECO:0000314"/>
    <property type="project" value="UniProtKB"/>
</dbReference>
<dbReference type="GO" id="GO:0006508">
    <property type="term" value="P:proteolysis"/>
    <property type="evidence" value="ECO:0007669"/>
    <property type="project" value="InterPro"/>
</dbReference>
<dbReference type="CDD" id="cd05471">
    <property type="entry name" value="pepsin_like"/>
    <property type="match status" value="1"/>
</dbReference>
<dbReference type="Gene3D" id="2.40.70.10">
    <property type="entry name" value="Acid Proteases"/>
    <property type="match status" value="2"/>
</dbReference>
<dbReference type="InterPro" id="IPR001461">
    <property type="entry name" value="Aspartic_peptidase_A1"/>
</dbReference>
<dbReference type="InterPro" id="IPR034164">
    <property type="entry name" value="Pepsin-like_dom"/>
</dbReference>
<dbReference type="InterPro" id="IPR033121">
    <property type="entry name" value="PEPTIDASE_A1"/>
</dbReference>
<dbReference type="InterPro" id="IPR021109">
    <property type="entry name" value="Peptidase_aspartic_dom_sf"/>
</dbReference>
<dbReference type="PANTHER" id="PTHR47966">
    <property type="entry name" value="BETA-SITE APP-CLEAVING ENZYME, ISOFORM A-RELATED"/>
    <property type="match status" value="1"/>
</dbReference>
<dbReference type="PANTHER" id="PTHR47966:SF51">
    <property type="entry name" value="BETA-SITE APP-CLEAVING ENZYME, ISOFORM A-RELATED"/>
    <property type="match status" value="1"/>
</dbReference>
<dbReference type="Pfam" id="PF00026">
    <property type="entry name" value="Asp"/>
    <property type="match status" value="1"/>
</dbReference>
<dbReference type="PRINTS" id="PR00792">
    <property type="entry name" value="PEPSIN"/>
</dbReference>
<dbReference type="SUPFAM" id="SSF50630">
    <property type="entry name" value="Acid proteases"/>
    <property type="match status" value="1"/>
</dbReference>
<dbReference type="PROSITE" id="PS51767">
    <property type="entry name" value="PEPTIDASE_A1"/>
    <property type="match status" value="1"/>
</dbReference>
<evidence type="ECO:0000255" key="1"/>
<evidence type="ECO:0000255" key="2">
    <source>
        <dbReference type="PROSITE-ProRule" id="PRU00498"/>
    </source>
</evidence>
<evidence type="ECO:0000255" key="3">
    <source>
        <dbReference type="PROSITE-ProRule" id="PRU01103"/>
    </source>
</evidence>
<evidence type="ECO:0000269" key="4">
    <source>
    </source>
</evidence>
<evidence type="ECO:0000305" key="5"/>
<evidence type="ECO:0000305" key="6">
    <source>
    </source>
</evidence>
<evidence type="ECO:0000312" key="7">
    <source>
        <dbReference type="EMBL" id="EDP42573.1"/>
    </source>
</evidence>
<evidence type="ECO:0000312" key="8">
    <source>
        <dbReference type="Proteomes" id="UP000008837"/>
    </source>
</evidence>
<gene>
    <name evidence="7" type="ORF">MGL_3331</name>
</gene>
<comment type="function">
    <text evidence="4">Probable inactive secreted aspartyl protease (PubMed:37748748). May promote an inflammatory immune response in the host when the host skin barrier is breached (PubMed:37748748). Has no detectable protease activity in vitro on fluorogenic substrates, a peptide library, or with the general protease substrate casein (PubMed:37748748). The presence of the enzyme also does not affect the activity of the secreted aspartyl protease SAP1 (PubMed:37748748).</text>
</comment>
<comment type="subcellular location">
    <subcellularLocation>
        <location evidence="6">Secreted</location>
    </subcellularLocation>
</comment>
<comment type="induction">
    <text evidence="4">Expressed on human skin of healthy people and patients afflicted by atopic dermatitis or seborrheic dermatitis.</text>
</comment>
<comment type="similarity">
    <text evidence="5">Belongs to the peptidase A1 family.</text>
</comment>
<comment type="caution">
    <text evidence="4">Although the two active site Asp residues are conserved, appears to lack catalytic activity in vitro. This could be due to the active site motif diverging from the canonical Asp-X-Gly-X motif (where X is Thr or Ser) to containing a Tyr residue (Asp-Ser-Gly-Tyr). Additionally, a Tyr residue positioned close to the catalytic site that is potentially involved in coordinating water molecules for nucleophilic attack is substituted to Phe (Phe-137) in this protein. Also, a Gly residue typically conserved at the tip of the protease flap to enable substrate binding is substituted to leucine (Leu-138).</text>
</comment>
<proteinExistence type="evidence at protein level"/>
<feature type="signal peptide" evidence="1">
    <location>
        <begin position="1"/>
        <end position="20"/>
    </location>
</feature>
<feature type="propeptide" id="PRO_0000460581" description="Removed in mature form" evidence="4">
    <location>
        <begin position="21"/>
        <end position="69"/>
    </location>
</feature>
<feature type="chain" id="PRO_5002727244" description="Probable inactive secreted aspartyl protease" evidence="1">
    <location>
        <begin position="70"/>
        <end position="390"/>
    </location>
</feature>
<feature type="domain" description="Peptidase A1" evidence="3">
    <location>
        <begin position="86"/>
        <end position="388"/>
    </location>
</feature>
<feature type="active site" evidence="3">
    <location>
        <position position="104"/>
    </location>
</feature>
<feature type="active site" evidence="3">
    <location>
        <position position="273"/>
    </location>
</feature>
<feature type="glycosylation site" description="N-linked (GlcNAc...) asparagine" evidence="2">
    <location>
        <position position="62"/>
    </location>
</feature>
<feature type="disulfide bond" evidence="3">
    <location>
        <begin position="313"/>
        <end position="346"/>
    </location>
</feature>
<feature type="mutagenesis site" description="Does not enable protease activity; when associated with 137-Y-G-138." evidence="4">
    <original>Y</original>
    <variation>S</variation>
    <location>
        <position position="107"/>
    </location>
</feature>
<feature type="mutagenesis site" description="Does not enable protease activity; when associated with S-107." evidence="4">
    <original>FL</original>
    <variation>YG</variation>
    <location>
        <begin position="137"/>
        <end position="138"/>
    </location>
</feature>
<protein>
    <recommendedName>
        <fullName evidence="5">Probable inactive secreted aspartyl protease</fullName>
    </recommendedName>
</protein>
<keyword id="KW-1015">Disulfide bond</keyword>
<keyword id="KW-0325">Glycoprotein</keyword>
<keyword id="KW-1185">Reference proteome</keyword>
<keyword id="KW-0964">Secreted</keyword>
<keyword id="KW-0732">Signal</keyword>
<organism evidence="8">
    <name type="scientific">Malassezia globosa (strain ATCC MYA-4612 / CBS 7966)</name>
    <name type="common">Dandruff-associated fungus</name>
    <dbReference type="NCBI Taxonomy" id="425265"/>
    <lineage>
        <taxon>Eukaryota</taxon>
        <taxon>Fungi</taxon>
        <taxon>Dikarya</taxon>
        <taxon>Basidiomycota</taxon>
        <taxon>Ustilaginomycotina</taxon>
        <taxon>Malasseziomycetes</taxon>
        <taxon>Malasseziales</taxon>
        <taxon>Malasseziaceae</taxon>
        <taxon>Malassezia</taxon>
    </lineage>
</organism>
<sequence length="390" mass="41672">MQLTIKALVGILTTISAATAVSFDMENLGAEKRGVSGEELHMLHGNEVLARFANGVYPEVANGTRVSKRAGGAEVDLTSVGGGTAWAVKAKIGSNEEEVTMLLDSGYEHALVAADSDYSPGKSSSNENTGEKFFAGFLTGGGNEGTIHLDDLSVGGLKASKFAFGYTKNRDFSSNQKLGGILGMSLPGHVDYVPGFKNHGWGGFIQTLKNQGVIDEAMYQMTLKGDGGKLSIGEVDDSQYEGDLETLMNTGKAYGHCGFKGTLNGEKHNFLLDSGTTGIAGSYDSVKKFLQGMSGVELVEEDKRGSVTGKVDCDSMPSFKISVDGKFDVKLSDDVMKKYDLGNGKCLLPIYGYTNMPKSYSYNWIVGGAFMREVSVVCKFDSNEMQIARQ</sequence>
<accession>A8Q7G1</accession>
<name>SEAP2_MALGO</name>
<reference evidence="8" key="1">
    <citation type="journal article" date="2007" name="Proc. Natl. Acad. Sci. U.S.A.">
        <title>Dandruff-associated Malassezia genomes reveal convergent and divergent virulence traits shared with plant and human fungal pathogens.</title>
        <authorList>
            <person name="Xu J."/>
            <person name="Saunders C.W."/>
            <person name="Hu P."/>
            <person name="Grant R.A."/>
            <person name="Boekhout T."/>
            <person name="Kuramae E.E."/>
            <person name="Kronstad J.W."/>
            <person name="DeAngelis Y.M."/>
            <person name="Reeder N.L."/>
            <person name="Johnstone K.R."/>
            <person name="Leland M."/>
            <person name="Fieno A.M."/>
            <person name="Begley W.M."/>
            <person name="Sun Y."/>
            <person name="Lacey M.P."/>
            <person name="Chaudhary T."/>
            <person name="Keough T."/>
            <person name="Chu L."/>
            <person name="Sears R."/>
            <person name="Yuan B."/>
            <person name="Dawson T.L. Jr."/>
        </authorList>
    </citation>
    <scope>NUCLEOTIDE SEQUENCE [LARGE SCALE GENOMIC DNA]</scope>
    <source>
        <strain>ATCC MYA-4612 / CBS 7966</strain>
    </source>
</reference>
<reference evidence="5" key="2">
    <citation type="journal article" date="2024" name="Biochimie">
        <title>A Malassezia pseudoprotease dominates the secreted hydrolase landscape and is a potential allergen on skin.</title>
        <authorList>
            <person name="Chua W."/>
            <person name="Marsh C.O."/>
            <person name="Poh S.E."/>
            <person name="Koh W.L."/>
            <person name="Lee M.L.Y."/>
            <person name="Koh L.F."/>
            <person name="Tang X.E."/>
            <person name="See P."/>
            <person name="Ser Z."/>
            <person name="Wang S.M."/>
            <person name="Sobota R.M."/>
            <person name="Dawson T.L. Jr."/>
            <person name="Yew Y.W."/>
            <person name="Thng S."/>
            <person name="O'Donoghue A.J."/>
            <person name="Oon H.H."/>
            <person name="Common J.E."/>
            <person name="Li H."/>
        </authorList>
    </citation>
    <scope>FUNCTION</scope>
    <scope>SUBCELLULAR LOCATION</scope>
    <scope>INDUCTION</scope>
    <scope>IDENTIFICATION BY MASS SPECTROMETRY</scope>
    <scope>MUTAGENESIS OF TYR-107 AND 137-PHE-LEU-138</scope>
</reference>